<proteinExistence type="inferred from homology"/>
<gene>
    <name evidence="1" type="primary">plsY1</name>
    <name type="ordered locus">DR_2021</name>
</gene>
<dbReference type="EC" id="2.3.1.275" evidence="1"/>
<dbReference type="EMBL" id="AE000513">
    <property type="protein sequence ID" value="AAF11571.1"/>
    <property type="molecule type" value="Genomic_DNA"/>
</dbReference>
<dbReference type="PIR" id="A75324">
    <property type="entry name" value="A75324"/>
</dbReference>
<dbReference type="RefSeq" id="NP_295744.1">
    <property type="nucleotide sequence ID" value="NC_001263.1"/>
</dbReference>
<dbReference type="RefSeq" id="WP_010888654.1">
    <property type="nucleotide sequence ID" value="NC_001263.1"/>
</dbReference>
<dbReference type="SMR" id="Q9RSV1"/>
<dbReference type="FunCoup" id="Q9RSV1">
    <property type="interactions" value="199"/>
</dbReference>
<dbReference type="STRING" id="243230.DR_2021"/>
<dbReference type="PaxDb" id="243230-DR_2021"/>
<dbReference type="EnsemblBacteria" id="AAF11571">
    <property type="protein sequence ID" value="AAF11571"/>
    <property type="gene ID" value="DR_2021"/>
</dbReference>
<dbReference type="GeneID" id="69518259"/>
<dbReference type="KEGG" id="dra:DR_2021"/>
<dbReference type="PATRIC" id="fig|243230.17.peg.2245"/>
<dbReference type="eggNOG" id="COG0344">
    <property type="taxonomic scope" value="Bacteria"/>
</dbReference>
<dbReference type="HOGENOM" id="CLU_081254_0_0_0"/>
<dbReference type="InParanoid" id="Q9RSV1"/>
<dbReference type="OrthoDB" id="9777124at2"/>
<dbReference type="UniPathway" id="UPA00085"/>
<dbReference type="Proteomes" id="UP000002524">
    <property type="component" value="Chromosome 1"/>
</dbReference>
<dbReference type="GO" id="GO:0005886">
    <property type="term" value="C:plasma membrane"/>
    <property type="evidence" value="ECO:0000318"/>
    <property type="project" value="GO_Central"/>
</dbReference>
<dbReference type="GO" id="GO:0043772">
    <property type="term" value="F:acyl-phosphate glycerol-3-phosphate acyltransferase activity"/>
    <property type="evidence" value="ECO:0007669"/>
    <property type="project" value="UniProtKB-UniRule"/>
</dbReference>
<dbReference type="GO" id="GO:0008654">
    <property type="term" value="P:phospholipid biosynthetic process"/>
    <property type="evidence" value="ECO:0007669"/>
    <property type="project" value="UniProtKB-UniRule"/>
</dbReference>
<dbReference type="HAMAP" id="MF_01043">
    <property type="entry name" value="PlsY"/>
    <property type="match status" value="1"/>
</dbReference>
<dbReference type="InterPro" id="IPR003811">
    <property type="entry name" value="G3P_acylTferase_PlsY"/>
</dbReference>
<dbReference type="NCBIfam" id="TIGR00023">
    <property type="entry name" value="glycerol-3-phosphate 1-O-acyltransferase PlsY"/>
    <property type="match status" value="1"/>
</dbReference>
<dbReference type="PANTHER" id="PTHR30309:SF0">
    <property type="entry name" value="GLYCEROL-3-PHOSPHATE ACYLTRANSFERASE-RELATED"/>
    <property type="match status" value="1"/>
</dbReference>
<dbReference type="PANTHER" id="PTHR30309">
    <property type="entry name" value="INNER MEMBRANE PROTEIN YGIH"/>
    <property type="match status" value="1"/>
</dbReference>
<dbReference type="Pfam" id="PF02660">
    <property type="entry name" value="G3P_acyltransf"/>
    <property type="match status" value="1"/>
</dbReference>
<dbReference type="SMART" id="SM01207">
    <property type="entry name" value="G3P_acyltransf"/>
    <property type="match status" value="1"/>
</dbReference>
<feature type="chain" id="PRO_0000188359" description="Glycerol-3-phosphate acyltransferase 1">
    <location>
        <begin position="1"/>
        <end position="198"/>
    </location>
</feature>
<feature type="transmembrane region" description="Helical" evidence="1">
    <location>
        <begin position="5"/>
        <end position="25"/>
    </location>
</feature>
<feature type="transmembrane region" description="Helical" evidence="1">
    <location>
        <begin position="52"/>
        <end position="72"/>
    </location>
</feature>
<feature type="transmembrane region" description="Helical" evidence="1">
    <location>
        <begin position="81"/>
        <end position="101"/>
    </location>
</feature>
<feature type="transmembrane region" description="Helical" evidence="1">
    <location>
        <begin position="111"/>
        <end position="131"/>
    </location>
</feature>
<feature type="transmembrane region" description="Helical" evidence="1">
    <location>
        <begin position="138"/>
        <end position="158"/>
    </location>
</feature>
<organism>
    <name type="scientific">Deinococcus radiodurans (strain ATCC 13939 / DSM 20539 / JCM 16871 / CCUG 27074 / LMG 4051 / NBRC 15346 / NCIMB 9279 / VKM B-1422 / R1)</name>
    <dbReference type="NCBI Taxonomy" id="243230"/>
    <lineage>
        <taxon>Bacteria</taxon>
        <taxon>Thermotogati</taxon>
        <taxon>Deinococcota</taxon>
        <taxon>Deinococci</taxon>
        <taxon>Deinococcales</taxon>
        <taxon>Deinococcaceae</taxon>
        <taxon>Deinococcus</taxon>
    </lineage>
</organism>
<comment type="function">
    <text evidence="1">Catalyzes the transfer of an acyl group from acyl-phosphate (acyl-PO(4)) to glycerol-3-phosphate (G3P) to form lysophosphatidic acid (LPA). This enzyme utilizes acyl-phosphate as fatty acyl donor, but not acyl-CoA or acyl-ACP.</text>
</comment>
<comment type="catalytic activity">
    <reaction evidence="1">
        <text>an acyl phosphate + sn-glycerol 3-phosphate = a 1-acyl-sn-glycero-3-phosphate + phosphate</text>
        <dbReference type="Rhea" id="RHEA:34075"/>
        <dbReference type="ChEBI" id="CHEBI:43474"/>
        <dbReference type="ChEBI" id="CHEBI:57597"/>
        <dbReference type="ChEBI" id="CHEBI:57970"/>
        <dbReference type="ChEBI" id="CHEBI:59918"/>
        <dbReference type="EC" id="2.3.1.275"/>
    </reaction>
</comment>
<comment type="pathway">
    <text evidence="1">Lipid metabolism; phospholipid metabolism.</text>
</comment>
<comment type="subunit">
    <text evidence="1">Probably interacts with PlsX.</text>
</comment>
<comment type="subcellular location">
    <subcellularLocation>
        <location evidence="1">Cell membrane</location>
        <topology evidence="1">Multi-pass membrane protein</topology>
    </subcellularLocation>
</comment>
<comment type="similarity">
    <text evidence="1">Belongs to the PlsY family.</text>
</comment>
<sequence length="198" mass="20713">MTLTALLALLLSYLIGAIPAAAWLARARGVDIRKVGSGNSGATNVLRSLGKGPALLVASFDILKGVLAVLLARALGLSAEWAALCGVLAVIGHNFSPFLAFRGGKGVATSFGVIAILDPVLGLTTFVLAIACMWLTRFVSAGSIMGAFIAGALVLVLPRPTWDRAAVLFLAALLVWQHRENIRKLQAGTERRLGEKVS</sequence>
<evidence type="ECO:0000255" key="1">
    <source>
        <dbReference type="HAMAP-Rule" id="MF_01043"/>
    </source>
</evidence>
<reference key="1">
    <citation type="journal article" date="1999" name="Science">
        <title>Genome sequence of the radioresistant bacterium Deinococcus radiodurans R1.</title>
        <authorList>
            <person name="White O."/>
            <person name="Eisen J.A."/>
            <person name="Heidelberg J.F."/>
            <person name="Hickey E.K."/>
            <person name="Peterson J.D."/>
            <person name="Dodson R.J."/>
            <person name="Haft D.H."/>
            <person name="Gwinn M.L."/>
            <person name="Nelson W.C."/>
            <person name="Richardson D.L."/>
            <person name="Moffat K.S."/>
            <person name="Qin H."/>
            <person name="Jiang L."/>
            <person name="Pamphile W."/>
            <person name="Crosby M."/>
            <person name="Shen M."/>
            <person name="Vamathevan J.J."/>
            <person name="Lam P."/>
            <person name="McDonald L.A."/>
            <person name="Utterback T.R."/>
            <person name="Zalewski C."/>
            <person name="Makarova K.S."/>
            <person name="Aravind L."/>
            <person name="Daly M.J."/>
            <person name="Minton K.W."/>
            <person name="Fleischmann R.D."/>
            <person name="Ketchum K.A."/>
            <person name="Nelson K.E."/>
            <person name="Salzberg S.L."/>
            <person name="Smith H.O."/>
            <person name="Venter J.C."/>
            <person name="Fraser C.M."/>
        </authorList>
    </citation>
    <scope>NUCLEOTIDE SEQUENCE [LARGE SCALE GENOMIC DNA]</scope>
    <source>
        <strain>ATCC 13939 / DSM 20539 / JCM 16871 / CCUG 27074 / LMG 4051 / NBRC 15346 / NCIMB 9279 / VKM B-1422 / R1</strain>
    </source>
</reference>
<protein>
    <recommendedName>
        <fullName evidence="1">Glycerol-3-phosphate acyltransferase 1</fullName>
    </recommendedName>
    <alternativeName>
        <fullName evidence="1">Acyl-PO4 G3P acyltransferase 1</fullName>
    </alternativeName>
    <alternativeName>
        <fullName evidence="1">Acyl-phosphate--glycerol-3-phosphate acyltransferase 1</fullName>
    </alternativeName>
    <alternativeName>
        <fullName evidence="1">G3P acyltransferase 1</fullName>
        <shortName evidence="1">GPAT 1</shortName>
        <ecNumber evidence="1">2.3.1.275</ecNumber>
    </alternativeName>
    <alternativeName>
        <fullName evidence="1">Lysophosphatidic acid synthase 1</fullName>
        <shortName evidence="1">LPA synthase 1</shortName>
    </alternativeName>
</protein>
<name>PLSY1_DEIRA</name>
<accession>Q9RSV1</accession>
<keyword id="KW-1003">Cell membrane</keyword>
<keyword id="KW-0444">Lipid biosynthesis</keyword>
<keyword id="KW-0443">Lipid metabolism</keyword>
<keyword id="KW-0472">Membrane</keyword>
<keyword id="KW-0594">Phospholipid biosynthesis</keyword>
<keyword id="KW-1208">Phospholipid metabolism</keyword>
<keyword id="KW-1185">Reference proteome</keyword>
<keyword id="KW-0808">Transferase</keyword>
<keyword id="KW-0812">Transmembrane</keyword>
<keyword id="KW-1133">Transmembrane helix</keyword>